<gene>
    <name evidence="1" type="primary">rplX</name>
    <name type="ordered locus">Msil_0569</name>
</gene>
<accession>B8ELF2</accession>
<protein>
    <recommendedName>
        <fullName evidence="1">Large ribosomal subunit protein uL24</fullName>
    </recommendedName>
    <alternativeName>
        <fullName evidence="2">50S ribosomal protein L24</fullName>
    </alternativeName>
</protein>
<name>RL24_METSB</name>
<organism>
    <name type="scientific">Methylocella silvestris (strain DSM 15510 / CIP 108128 / LMG 27833 / NCIMB 13906 / BL2)</name>
    <dbReference type="NCBI Taxonomy" id="395965"/>
    <lineage>
        <taxon>Bacteria</taxon>
        <taxon>Pseudomonadati</taxon>
        <taxon>Pseudomonadota</taxon>
        <taxon>Alphaproteobacteria</taxon>
        <taxon>Hyphomicrobiales</taxon>
        <taxon>Beijerinckiaceae</taxon>
        <taxon>Methylocella</taxon>
    </lineage>
</organism>
<feature type="chain" id="PRO_1000165955" description="Large ribosomal subunit protein uL24">
    <location>
        <begin position="1"/>
        <end position="105"/>
    </location>
</feature>
<keyword id="KW-1185">Reference proteome</keyword>
<keyword id="KW-0687">Ribonucleoprotein</keyword>
<keyword id="KW-0689">Ribosomal protein</keyword>
<keyword id="KW-0694">RNA-binding</keyword>
<keyword id="KW-0699">rRNA-binding</keyword>
<proteinExistence type="inferred from homology"/>
<sequence>MAAKIKKGDKVVVLVGRDKGRSGEVLQVIPKEDRALVRGVNLVKRHQRQTAQQEAGIVSKEAAIQLSNLAVADPKDGKPTRVGFKVLEDGRKVRFAKRSGDVIDG</sequence>
<reference key="1">
    <citation type="journal article" date="2010" name="J. Bacteriol.">
        <title>Complete genome sequence of the aerobic facultative methanotroph Methylocella silvestris BL2.</title>
        <authorList>
            <person name="Chen Y."/>
            <person name="Crombie A."/>
            <person name="Rahman M.T."/>
            <person name="Dedysh S.N."/>
            <person name="Liesack W."/>
            <person name="Stott M.B."/>
            <person name="Alam M."/>
            <person name="Theisen A.R."/>
            <person name="Murrell J.C."/>
            <person name="Dunfield P.F."/>
        </authorList>
    </citation>
    <scope>NUCLEOTIDE SEQUENCE [LARGE SCALE GENOMIC DNA]</scope>
    <source>
        <strain>DSM 15510 / CIP 108128 / LMG 27833 / NCIMB 13906 / BL2</strain>
    </source>
</reference>
<comment type="function">
    <text evidence="1">One of two assembly initiator proteins, it binds directly to the 5'-end of the 23S rRNA, where it nucleates assembly of the 50S subunit.</text>
</comment>
<comment type="function">
    <text evidence="1">One of the proteins that surrounds the polypeptide exit tunnel on the outside of the subunit.</text>
</comment>
<comment type="subunit">
    <text evidence="1">Part of the 50S ribosomal subunit.</text>
</comment>
<comment type="similarity">
    <text evidence="1">Belongs to the universal ribosomal protein uL24 family.</text>
</comment>
<evidence type="ECO:0000255" key="1">
    <source>
        <dbReference type="HAMAP-Rule" id="MF_01326"/>
    </source>
</evidence>
<evidence type="ECO:0000305" key="2"/>
<dbReference type="EMBL" id="CP001280">
    <property type="protein sequence ID" value="ACK49541.1"/>
    <property type="molecule type" value="Genomic_DNA"/>
</dbReference>
<dbReference type="RefSeq" id="WP_012589611.1">
    <property type="nucleotide sequence ID" value="NC_011666.1"/>
</dbReference>
<dbReference type="SMR" id="B8ELF2"/>
<dbReference type="STRING" id="395965.Msil_0569"/>
<dbReference type="KEGG" id="msl:Msil_0569"/>
<dbReference type="eggNOG" id="COG0198">
    <property type="taxonomic scope" value="Bacteria"/>
</dbReference>
<dbReference type="HOGENOM" id="CLU_093315_2_2_5"/>
<dbReference type="OrthoDB" id="9807419at2"/>
<dbReference type="Proteomes" id="UP000002257">
    <property type="component" value="Chromosome"/>
</dbReference>
<dbReference type="GO" id="GO:1990904">
    <property type="term" value="C:ribonucleoprotein complex"/>
    <property type="evidence" value="ECO:0007669"/>
    <property type="project" value="UniProtKB-KW"/>
</dbReference>
<dbReference type="GO" id="GO:0005840">
    <property type="term" value="C:ribosome"/>
    <property type="evidence" value="ECO:0007669"/>
    <property type="project" value="UniProtKB-KW"/>
</dbReference>
<dbReference type="GO" id="GO:0019843">
    <property type="term" value="F:rRNA binding"/>
    <property type="evidence" value="ECO:0007669"/>
    <property type="project" value="UniProtKB-UniRule"/>
</dbReference>
<dbReference type="GO" id="GO:0003735">
    <property type="term" value="F:structural constituent of ribosome"/>
    <property type="evidence" value="ECO:0007669"/>
    <property type="project" value="InterPro"/>
</dbReference>
<dbReference type="GO" id="GO:0006412">
    <property type="term" value="P:translation"/>
    <property type="evidence" value="ECO:0007669"/>
    <property type="project" value="UniProtKB-UniRule"/>
</dbReference>
<dbReference type="CDD" id="cd06089">
    <property type="entry name" value="KOW_RPL26"/>
    <property type="match status" value="1"/>
</dbReference>
<dbReference type="FunFam" id="2.30.30.30:FF:000004">
    <property type="entry name" value="50S ribosomal protein L24"/>
    <property type="match status" value="1"/>
</dbReference>
<dbReference type="Gene3D" id="2.30.30.30">
    <property type="match status" value="1"/>
</dbReference>
<dbReference type="HAMAP" id="MF_01326_B">
    <property type="entry name" value="Ribosomal_uL24_B"/>
    <property type="match status" value="1"/>
</dbReference>
<dbReference type="InterPro" id="IPR005824">
    <property type="entry name" value="KOW"/>
</dbReference>
<dbReference type="InterPro" id="IPR014722">
    <property type="entry name" value="Rib_uL2_dom2"/>
</dbReference>
<dbReference type="InterPro" id="IPR003256">
    <property type="entry name" value="Ribosomal_uL24"/>
</dbReference>
<dbReference type="InterPro" id="IPR005825">
    <property type="entry name" value="Ribosomal_uL24_CS"/>
</dbReference>
<dbReference type="InterPro" id="IPR041988">
    <property type="entry name" value="Ribosomal_uL24_KOW"/>
</dbReference>
<dbReference type="InterPro" id="IPR008991">
    <property type="entry name" value="Translation_prot_SH3-like_sf"/>
</dbReference>
<dbReference type="NCBIfam" id="TIGR01079">
    <property type="entry name" value="rplX_bact"/>
    <property type="match status" value="1"/>
</dbReference>
<dbReference type="PANTHER" id="PTHR12903">
    <property type="entry name" value="MITOCHONDRIAL RIBOSOMAL PROTEIN L24"/>
    <property type="match status" value="1"/>
</dbReference>
<dbReference type="Pfam" id="PF00467">
    <property type="entry name" value="KOW"/>
    <property type="match status" value="1"/>
</dbReference>
<dbReference type="Pfam" id="PF17136">
    <property type="entry name" value="ribosomal_L24"/>
    <property type="match status" value="1"/>
</dbReference>
<dbReference type="SMART" id="SM00739">
    <property type="entry name" value="KOW"/>
    <property type="match status" value="1"/>
</dbReference>
<dbReference type="SUPFAM" id="SSF50104">
    <property type="entry name" value="Translation proteins SH3-like domain"/>
    <property type="match status" value="1"/>
</dbReference>
<dbReference type="PROSITE" id="PS01108">
    <property type="entry name" value="RIBOSOMAL_L24"/>
    <property type="match status" value="1"/>
</dbReference>